<accession>Q9YD22</accession>
<name>RS19E_AERPE</name>
<feature type="chain" id="PRO_0000153837" description="Small ribosomal subunit protein eS19">
    <location>
        <begin position="1"/>
        <end position="153"/>
    </location>
</feature>
<proteinExistence type="inferred from homology"/>
<keyword id="KW-1185">Reference proteome</keyword>
<keyword id="KW-0687">Ribonucleoprotein</keyword>
<keyword id="KW-0689">Ribosomal protein</keyword>
<gene>
    <name evidence="1" type="primary">rps19e</name>
    <name type="ordered locus">APE_1090</name>
</gene>
<reference key="1">
    <citation type="journal article" date="1999" name="DNA Res.">
        <title>Complete genome sequence of an aerobic hyper-thermophilic crenarchaeon, Aeropyrum pernix K1.</title>
        <authorList>
            <person name="Kawarabayasi Y."/>
            <person name="Hino Y."/>
            <person name="Horikawa H."/>
            <person name="Yamazaki S."/>
            <person name="Haikawa Y."/>
            <person name="Jin-no K."/>
            <person name="Takahashi M."/>
            <person name="Sekine M."/>
            <person name="Baba S."/>
            <person name="Ankai A."/>
            <person name="Kosugi H."/>
            <person name="Hosoyama A."/>
            <person name="Fukui S."/>
            <person name="Nagai Y."/>
            <person name="Nishijima K."/>
            <person name="Nakazawa H."/>
            <person name="Takamiya M."/>
            <person name="Masuda S."/>
            <person name="Funahashi T."/>
            <person name="Tanaka T."/>
            <person name="Kudoh Y."/>
            <person name="Yamazaki J."/>
            <person name="Kushida N."/>
            <person name="Oguchi A."/>
            <person name="Aoki K."/>
            <person name="Kubota K."/>
            <person name="Nakamura Y."/>
            <person name="Nomura N."/>
            <person name="Sako Y."/>
            <person name="Kikuchi H."/>
        </authorList>
    </citation>
    <scope>NUCLEOTIDE SEQUENCE [LARGE SCALE GENOMIC DNA]</scope>
    <source>
        <strain>ATCC 700893 / DSM 11879 / JCM 9820 / NBRC 100138 / K1</strain>
    </source>
</reference>
<comment type="function">
    <text evidence="1">May be involved in maturation of the 30S ribosomal subunit.</text>
</comment>
<comment type="subunit">
    <text evidence="1">Part of the 30S ribosomal subunit.</text>
</comment>
<comment type="similarity">
    <text evidence="1">Belongs to the eukaryotic ribosomal protein eS19 family.</text>
</comment>
<evidence type="ECO:0000255" key="1">
    <source>
        <dbReference type="HAMAP-Rule" id="MF_01474"/>
    </source>
</evidence>
<evidence type="ECO:0000305" key="2"/>
<protein>
    <recommendedName>
        <fullName evidence="1">Small ribosomal subunit protein eS19</fullName>
    </recommendedName>
    <alternativeName>
        <fullName evidence="2">30S ribosomal protein S19e</fullName>
    </alternativeName>
</protein>
<organism>
    <name type="scientific">Aeropyrum pernix (strain ATCC 700893 / DSM 11879 / JCM 9820 / NBRC 100138 / K1)</name>
    <dbReference type="NCBI Taxonomy" id="272557"/>
    <lineage>
        <taxon>Archaea</taxon>
        <taxon>Thermoproteota</taxon>
        <taxon>Thermoprotei</taxon>
        <taxon>Desulfurococcales</taxon>
        <taxon>Desulfurococcaceae</taxon>
        <taxon>Aeropyrum</taxon>
    </lineage>
</organism>
<sequence length="153" mass="17486">MVNALEVPADLLIRRVARKLKEKYPQVKPPAWAYFAKTGPHKERPPTDRDWWYVRAASILRKLYKSPEPIGIETFRTIYGGRQNRGSAPEHFRKAGGSVPRKILQQLEEAGLVVKVPGRGRTISPAGRSLLDTTAREIMEELVKTRPELERYL</sequence>
<dbReference type="EMBL" id="BA000002">
    <property type="protein sequence ID" value="BAA80075.1"/>
    <property type="molecule type" value="Genomic_DNA"/>
</dbReference>
<dbReference type="PIR" id="C72709">
    <property type="entry name" value="C72709"/>
</dbReference>
<dbReference type="RefSeq" id="WP_010866167.1">
    <property type="nucleotide sequence ID" value="NC_000854.2"/>
</dbReference>
<dbReference type="SMR" id="Q9YD22"/>
<dbReference type="STRING" id="272557.APE_1090"/>
<dbReference type="EnsemblBacteria" id="BAA80075">
    <property type="protein sequence ID" value="BAA80075"/>
    <property type="gene ID" value="APE_1090"/>
</dbReference>
<dbReference type="GeneID" id="1445784"/>
<dbReference type="KEGG" id="ape:APE_1090"/>
<dbReference type="PATRIC" id="fig|272557.25.peg.765"/>
<dbReference type="eggNOG" id="arCOG01344">
    <property type="taxonomic scope" value="Archaea"/>
</dbReference>
<dbReference type="Proteomes" id="UP000002518">
    <property type="component" value="Chromosome"/>
</dbReference>
<dbReference type="GO" id="GO:0022627">
    <property type="term" value="C:cytosolic small ribosomal subunit"/>
    <property type="evidence" value="ECO:0007669"/>
    <property type="project" value="TreeGrafter"/>
</dbReference>
<dbReference type="GO" id="GO:0003723">
    <property type="term" value="F:RNA binding"/>
    <property type="evidence" value="ECO:0007669"/>
    <property type="project" value="TreeGrafter"/>
</dbReference>
<dbReference type="GO" id="GO:0003735">
    <property type="term" value="F:structural constituent of ribosome"/>
    <property type="evidence" value="ECO:0007669"/>
    <property type="project" value="InterPro"/>
</dbReference>
<dbReference type="GO" id="GO:0000028">
    <property type="term" value="P:ribosomal small subunit assembly"/>
    <property type="evidence" value="ECO:0007669"/>
    <property type="project" value="TreeGrafter"/>
</dbReference>
<dbReference type="GO" id="GO:0006412">
    <property type="term" value="P:translation"/>
    <property type="evidence" value="ECO:0007669"/>
    <property type="project" value="UniProtKB-UniRule"/>
</dbReference>
<dbReference type="FunFam" id="1.10.10.10:FF:000449">
    <property type="entry name" value="30S ribosomal protein S19e"/>
    <property type="match status" value="1"/>
</dbReference>
<dbReference type="Gene3D" id="1.10.10.10">
    <property type="entry name" value="Winged helix-like DNA-binding domain superfamily/Winged helix DNA-binding domain"/>
    <property type="match status" value="1"/>
</dbReference>
<dbReference type="HAMAP" id="MF_01474">
    <property type="entry name" value="Ribosomal_eS19"/>
    <property type="match status" value="1"/>
</dbReference>
<dbReference type="InterPro" id="IPR001266">
    <property type="entry name" value="Ribosomal_eS19"/>
</dbReference>
<dbReference type="InterPro" id="IPR027548">
    <property type="entry name" value="Ribosomal_eS19_archaeal"/>
</dbReference>
<dbReference type="InterPro" id="IPR018277">
    <property type="entry name" value="Ribosomal_eS19_CS"/>
</dbReference>
<dbReference type="InterPro" id="IPR036388">
    <property type="entry name" value="WH-like_DNA-bd_sf"/>
</dbReference>
<dbReference type="InterPro" id="IPR036390">
    <property type="entry name" value="WH_DNA-bd_sf"/>
</dbReference>
<dbReference type="NCBIfam" id="NF006811">
    <property type="entry name" value="PRK09333.1"/>
    <property type="match status" value="1"/>
</dbReference>
<dbReference type="PANTHER" id="PTHR11710">
    <property type="entry name" value="40S RIBOSOMAL PROTEIN S19"/>
    <property type="match status" value="1"/>
</dbReference>
<dbReference type="PANTHER" id="PTHR11710:SF0">
    <property type="entry name" value="40S RIBOSOMAL PROTEIN S19"/>
    <property type="match status" value="1"/>
</dbReference>
<dbReference type="Pfam" id="PF01090">
    <property type="entry name" value="Ribosomal_S19e"/>
    <property type="match status" value="1"/>
</dbReference>
<dbReference type="SMART" id="SM01413">
    <property type="entry name" value="Ribosomal_S19e"/>
    <property type="match status" value="1"/>
</dbReference>
<dbReference type="SUPFAM" id="SSF46785">
    <property type="entry name" value="Winged helix' DNA-binding domain"/>
    <property type="match status" value="1"/>
</dbReference>
<dbReference type="PROSITE" id="PS00628">
    <property type="entry name" value="RIBOSOMAL_S19E"/>
    <property type="match status" value="1"/>
</dbReference>